<comment type="function">
    <text evidence="1">Core subunit of the mitochondrial membrane respiratory chain NADH dehydrogenase (Complex I) that is believed to belong to the minimal assembly required for catalysis. Complex I functions in the transfer of electrons from NADH to the respiratory chain. The immediate electron acceptor for the enzyme is believed to be ubiquinone (By similarity).</text>
</comment>
<comment type="catalytic activity">
    <reaction>
        <text>a ubiquinone + NADH + 5 H(+)(in) = a ubiquinol + NAD(+) + 4 H(+)(out)</text>
        <dbReference type="Rhea" id="RHEA:29091"/>
        <dbReference type="Rhea" id="RHEA-COMP:9565"/>
        <dbReference type="Rhea" id="RHEA-COMP:9566"/>
        <dbReference type="ChEBI" id="CHEBI:15378"/>
        <dbReference type="ChEBI" id="CHEBI:16389"/>
        <dbReference type="ChEBI" id="CHEBI:17976"/>
        <dbReference type="ChEBI" id="CHEBI:57540"/>
        <dbReference type="ChEBI" id="CHEBI:57945"/>
        <dbReference type="EC" id="7.1.1.2"/>
    </reaction>
</comment>
<comment type="subcellular location">
    <subcellularLocation>
        <location>Mitochondrion inner membrane</location>
        <topology>Multi-pass membrane protein</topology>
    </subcellularLocation>
</comment>
<comment type="similarity">
    <text evidence="3">Belongs to the complex I subunit 4 family.</text>
</comment>
<feature type="chain" id="PRO_0000271148" description="NADH-ubiquinone oxidoreductase chain 4">
    <location>
        <begin position="1"/>
        <end position="484"/>
    </location>
</feature>
<feature type="transmembrane region" description="Helical" evidence="2">
    <location>
        <begin position="1"/>
        <end position="21"/>
    </location>
</feature>
<feature type="transmembrane region" description="Helical" evidence="2">
    <location>
        <begin position="33"/>
        <end position="53"/>
    </location>
</feature>
<feature type="transmembrane region" description="Helical" evidence="2">
    <location>
        <begin position="77"/>
        <end position="97"/>
    </location>
</feature>
<feature type="transmembrane region" description="Helical" evidence="2">
    <location>
        <begin position="109"/>
        <end position="129"/>
    </location>
</feature>
<feature type="transmembrane region" description="Helical" evidence="2">
    <location>
        <begin position="130"/>
        <end position="150"/>
    </location>
</feature>
<feature type="transmembrane region" description="Helical" evidence="2">
    <location>
        <begin position="162"/>
        <end position="182"/>
    </location>
</feature>
<feature type="transmembrane region" description="Helical" evidence="2">
    <location>
        <begin position="206"/>
        <end position="226"/>
    </location>
</feature>
<feature type="transmembrane region" description="Helical" evidence="2">
    <location>
        <begin position="236"/>
        <end position="256"/>
    </location>
</feature>
<feature type="transmembrane region" description="Helical" evidence="2">
    <location>
        <begin position="270"/>
        <end position="290"/>
    </location>
</feature>
<feature type="transmembrane region" description="Helical" evidence="2">
    <location>
        <begin position="295"/>
        <end position="315"/>
    </location>
</feature>
<feature type="transmembrane region" description="Helical" evidence="2">
    <location>
        <begin position="326"/>
        <end position="346"/>
    </location>
</feature>
<feature type="transmembrane region" description="Helical" evidence="2">
    <location>
        <begin position="365"/>
        <end position="385"/>
    </location>
</feature>
<feature type="transmembrane region" description="Helical" evidence="2">
    <location>
        <begin position="405"/>
        <end position="425"/>
    </location>
</feature>
<feature type="transmembrane region" description="Helical" evidence="2">
    <location>
        <begin position="448"/>
        <end position="468"/>
    </location>
</feature>
<keyword id="KW-0249">Electron transport</keyword>
<keyword id="KW-0472">Membrane</keyword>
<keyword id="KW-0496">Mitochondrion</keyword>
<keyword id="KW-0999">Mitochondrion inner membrane</keyword>
<keyword id="KW-0520">NAD</keyword>
<keyword id="KW-1185">Reference proteome</keyword>
<keyword id="KW-0679">Respiratory chain</keyword>
<keyword id="KW-1278">Translocase</keyword>
<keyword id="KW-0812">Transmembrane</keyword>
<keyword id="KW-1133">Transmembrane helix</keyword>
<keyword id="KW-0813">Transport</keyword>
<keyword id="KW-0830">Ubiquinone</keyword>
<reference key="1">
    <citation type="submission" date="2005-08" db="EMBL/GenBank/DDBJ databases">
        <title>Annotation of mitochondrial genome of Ustilago maydis and comparative analysis of basidiomycete mtDNAs.</title>
        <authorList>
            <person name="Kennell J.C."/>
            <person name="Boehmer C."/>
        </authorList>
    </citation>
    <scope>NUCLEOTIDE SEQUENCE [LARGE SCALE GENOMIC DNA]</scope>
    <source>
        <strain>DSM 14603 / FGSC 9021 / UM521</strain>
    </source>
</reference>
<reference key="2">
    <citation type="journal article" date="2006" name="Nature">
        <title>Insights from the genome of the biotrophic fungal plant pathogen Ustilago maydis.</title>
        <authorList>
            <person name="Kaemper J."/>
            <person name="Kahmann R."/>
            <person name="Boelker M."/>
            <person name="Ma L.-J."/>
            <person name="Brefort T."/>
            <person name="Saville B.J."/>
            <person name="Banuett F."/>
            <person name="Kronstad J.W."/>
            <person name="Gold S.E."/>
            <person name="Mueller O."/>
            <person name="Perlin M.H."/>
            <person name="Woesten H.A.B."/>
            <person name="de Vries R."/>
            <person name="Ruiz-Herrera J."/>
            <person name="Reynaga-Pena C.G."/>
            <person name="Snetselaar K."/>
            <person name="McCann M."/>
            <person name="Perez-Martin J."/>
            <person name="Feldbruegge M."/>
            <person name="Basse C.W."/>
            <person name="Steinberg G."/>
            <person name="Ibeas J.I."/>
            <person name="Holloman W."/>
            <person name="Guzman P."/>
            <person name="Farman M.L."/>
            <person name="Stajich J.E."/>
            <person name="Sentandreu R."/>
            <person name="Gonzalez-Prieto J.M."/>
            <person name="Kennell J.C."/>
            <person name="Molina L."/>
            <person name="Schirawski J."/>
            <person name="Mendoza-Mendoza A."/>
            <person name="Greilinger D."/>
            <person name="Muench K."/>
            <person name="Roessel N."/>
            <person name="Scherer M."/>
            <person name="Vranes M."/>
            <person name="Ladendorf O."/>
            <person name="Vincon V."/>
            <person name="Fuchs U."/>
            <person name="Sandrock B."/>
            <person name="Meng S."/>
            <person name="Ho E.C.H."/>
            <person name="Cahill M.J."/>
            <person name="Boyce K.J."/>
            <person name="Klose J."/>
            <person name="Klosterman S.J."/>
            <person name="Deelstra H.J."/>
            <person name="Ortiz-Castellanos L."/>
            <person name="Li W."/>
            <person name="Sanchez-Alonso P."/>
            <person name="Schreier P.H."/>
            <person name="Haeuser-Hahn I."/>
            <person name="Vaupel M."/>
            <person name="Koopmann E."/>
            <person name="Friedrich G."/>
            <person name="Voss H."/>
            <person name="Schlueter T."/>
            <person name="Margolis J."/>
            <person name="Platt D."/>
            <person name="Swimmer C."/>
            <person name="Gnirke A."/>
            <person name="Chen F."/>
            <person name="Vysotskaia V."/>
            <person name="Mannhaupt G."/>
            <person name="Gueldener U."/>
            <person name="Muensterkoetter M."/>
            <person name="Haase D."/>
            <person name="Oesterheld M."/>
            <person name="Mewes H.-W."/>
            <person name="Mauceli E.W."/>
            <person name="DeCaprio D."/>
            <person name="Wade C.M."/>
            <person name="Butler J."/>
            <person name="Young S.K."/>
            <person name="Jaffe D.B."/>
            <person name="Calvo S.E."/>
            <person name="Nusbaum C."/>
            <person name="Galagan J.E."/>
            <person name="Birren B.W."/>
        </authorList>
    </citation>
    <scope>NUCLEOTIDE SEQUENCE [LARGE SCALE GENOMIC DNA]</scope>
    <source>
        <strain>DSM 14603 / FGSC 9021 / UM521</strain>
    </source>
</reference>
<name>NU4M_MYCMD</name>
<gene>
    <name type="primary">ND4</name>
    <name type="synonym">NAD4</name>
</gene>
<evidence type="ECO:0000250" key="1"/>
<evidence type="ECO:0000255" key="2"/>
<evidence type="ECO:0000305" key="3"/>
<sequence>MLTLLLIIPLVGALMLAPMQGNTRQSESQMKRLALGTSLINFVLSIVLWGEFDSSTSEYQFTQEFNQVNFCHLHIGVDGISLYFVLLTTFITPICILSNWDNIKEQLKYFLMCFLVLETLLIAVFVVLDILLFYVFFESVLIPLFLIVGIWGGSATRVRAAFLLFLYTLFGSLFMLLAFLVIYYNVGSTDFQVVSLSEINLESQKLLWLAVFISMAIKTPLLPFHVWLPRAHAEAPLAGSVILAGLILKLATYGYMRILIQFLPDATSYFSPLVQTIAVITLIYASLATLRQTDFKALVAYSSIGHMAVVVLGLFSNTIQGIDGALLLSIAHGVVSPALFILVGGVLYDRYHTRTIRYYRGMTAYMPLFSIMFFVFTIFNAAVPLSANWAGEFLCLAGAFQRNPVFAVLGSTGIVLSAAYSIWLYNRIAFGAWSKYLNYTTDLTRREFMLLLPLLFVAVVFGIFPNIILDSIHASTSGLIYSAS</sequence>
<proteinExistence type="inferred from homology"/>
<geneLocation type="mitochondrion"/>
<organism>
    <name type="scientific">Mycosarcoma maydis</name>
    <name type="common">Corn smut fungus</name>
    <name type="synonym">Ustilago maydis</name>
    <dbReference type="NCBI Taxonomy" id="5270"/>
    <lineage>
        <taxon>Eukaryota</taxon>
        <taxon>Fungi</taxon>
        <taxon>Dikarya</taxon>
        <taxon>Basidiomycota</taxon>
        <taxon>Ustilaginomycotina</taxon>
        <taxon>Ustilaginomycetes</taxon>
        <taxon>Ustilaginales</taxon>
        <taxon>Ustilaginaceae</taxon>
        <taxon>Mycosarcoma</taxon>
    </lineage>
</organism>
<dbReference type="EC" id="7.1.1.2"/>
<dbReference type="EMBL" id="DQ157700">
    <property type="protein sequence ID" value="AAZ67012.1"/>
    <property type="molecule type" value="Genomic_DNA"/>
</dbReference>
<dbReference type="EMBL" id="AACP01000277">
    <property type="status" value="NOT_ANNOTATED_CDS"/>
    <property type="molecule type" value="Genomic_DNA"/>
</dbReference>
<dbReference type="RefSeq" id="YP_762696.1">
    <property type="nucleotide sequence ID" value="NC_008368.1"/>
</dbReference>
<dbReference type="SMR" id="Q0H8X6"/>
<dbReference type="STRING" id="237631.Q0H8X6"/>
<dbReference type="GeneID" id="4308277"/>
<dbReference type="InParanoid" id="Q0H8X6"/>
<dbReference type="Proteomes" id="UP000000561">
    <property type="component" value="Mitochondrion"/>
</dbReference>
<dbReference type="GO" id="GO:0005743">
    <property type="term" value="C:mitochondrial inner membrane"/>
    <property type="evidence" value="ECO:0007669"/>
    <property type="project" value="UniProtKB-SubCell"/>
</dbReference>
<dbReference type="GO" id="GO:0045271">
    <property type="term" value="C:respiratory chain complex I"/>
    <property type="evidence" value="ECO:0000318"/>
    <property type="project" value="GO_Central"/>
</dbReference>
<dbReference type="GO" id="GO:0008137">
    <property type="term" value="F:NADH dehydrogenase (ubiquinone) activity"/>
    <property type="evidence" value="ECO:0007669"/>
    <property type="project" value="UniProtKB-EC"/>
</dbReference>
<dbReference type="GO" id="GO:0048039">
    <property type="term" value="F:ubiquinone binding"/>
    <property type="evidence" value="ECO:0000318"/>
    <property type="project" value="GO_Central"/>
</dbReference>
<dbReference type="GO" id="GO:0009060">
    <property type="term" value="P:aerobic respiration"/>
    <property type="evidence" value="ECO:0000318"/>
    <property type="project" value="GO_Central"/>
</dbReference>
<dbReference type="GO" id="GO:0042773">
    <property type="term" value="P:ATP synthesis coupled electron transport"/>
    <property type="evidence" value="ECO:0007669"/>
    <property type="project" value="InterPro"/>
</dbReference>
<dbReference type="GO" id="GO:0015990">
    <property type="term" value="P:electron transport coupled proton transport"/>
    <property type="evidence" value="ECO:0000318"/>
    <property type="project" value="GO_Central"/>
</dbReference>
<dbReference type="InterPro" id="IPR010227">
    <property type="entry name" value="NADH_Q_OxRdtase_chainM/4"/>
</dbReference>
<dbReference type="InterPro" id="IPR003918">
    <property type="entry name" value="NADH_UbQ_OxRdtase"/>
</dbReference>
<dbReference type="InterPro" id="IPR001750">
    <property type="entry name" value="ND/Mrp_TM"/>
</dbReference>
<dbReference type="NCBIfam" id="TIGR01972">
    <property type="entry name" value="NDH_I_M"/>
    <property type="match status" value="1"/>
</dbReference>
<dbReference type="PANTHER" id="PTHR43507">
    <property type="entry name" value="NADH-UBIQUINONE OXIDOREDUCTASE CHAIN 4"/>
    <property type="match status" value="1"/>
</dbReference>
<dbReference type="PANTHER" id="PTHR43507:SF1">
    <property type="entry name" value="NADH-UBIQUINONE OXIDOREDUCTASE CHAIN 4"/>
    <property type="match status" value="1"/>
</dbReference>
<dbReference type="Pfam" id="PF00361">
    <property type="entry name" value="Proton_antipo_M"/>
    <property type="match status" value="1"/>
</dbReference>
<dbReference type="PRINTS" id="PR01437">
    <property type="entry name" value="NUOXDRDTASE4"/>
</dbReference>
<accession>Q0H8X6</accession>
<protein>
    <recommendedName>
        <fullName>NADH-ubiquinone oxidoreductase chain 4</fullName>
        <ecNumber>7.1.1.2</ecNumber>
    </recommendedName>
    <alternativeName>
        <fullName>NADH dehydrogenase subunit 4</fullName>
    </alternativeName>
</protein>